<accession>C6BS43</accession>
<feature type="chain" id="PRO_1000203751" description="Serine--tRNA ligase">
    <location>
        <begin position="1"/>
        <end position="425"/>
    </location>
</feature>
<feature type="binding site" evidence="1">
    <location>
        <begin position="230"/>
        <end position="232"/>
    </location>
    <ligand>
        <name>L-serine</name>
        <dbReference type="ChEBI" id="CHEBI:33384"/>
    </ligand>
</feature>
<feature type="binding site" evidence="1">
    <location>
        <begin position="261"/>
        <end position="263"/>
    </location>
    <ligand>
        <name>ATP</name>
        <dbReference type="ChEBI" id="CHEBI:30616"/>
    </ligand>
</feature>
<feature type="binding site" evidence="1">
    <location>
        <position position="284"/>
    </location>
    <ligand>
        <name>L-serine</name>
        <dbReference type="ChEBI" id="CHEBI:33384"/>
    </ligand>
</feature>
<feature type="binding site" evidence="1">
    <location>
        <begin position="348"/>
        <end position="351"/>
    </location>
    <ligand>
        <name>ATP</name>
        <dbReference type="ChEBI" id="CHEBI:30616"/>
    </ligand>
</feature>
<feature type="binding site" evidence="1">
    <location>
        <position position="384"/>
    </location>
    <ligand>
        <name>L-serine</name>
        <dbReference type="ChEBI" id="CHEBI:33384"/>
    </ligand>
</feature>
<proteinExistence type="inferred from homology"/>
<evidence type="ECO:0000255" key="1">
    <source>
        <dbReference type="HAMAP-Rule" id="MF_00176"/>
    </source>
</evidence>
<reference key="1">
    <citation type="submission" date="2009-06" db="EMBL/GenBank/DDBJ databases">
        <title>Complete sequence of Desulfovibrio salexigens DSM 2638.</title>
        <authorList>
            <consortium name="US DOE Joint Genome Institute"/>
            <person name="Lucas S."/>
            <person name="Copeland A."/>
            <person name="Lapidus A."/>
            <person name="Glavina del Rio T."/>
            <person name="Tice H."/>
            <person name="Bruce D."/>
            <person name="Goodwin L."/>
            <person name="Pitluck S."/>
            <person name="Munk A.C."/>
            <person name="Brettin T."/>
            <person name="Detter J.C."/>
            <person name="Han C."/>
            <person name="Tapia R."/>
            <person name="Larimer F."/>
            <person name="Land M."/>
            <person name="Hauser L."/>
            <person name="Kyrpides N."/>
            <person name="Anderson I."/>
            <person name="Wall J.D."/>
            <person name="Arkin A.P."/>
            <person name="Dehal P."/>
            <person name="Chivian D."/>
            <person name="Giles B."/>
            <person name="Hazen T.C."/>
        </authorList>
    </citation>
    <scope>NUCLEOTIDE SEQUENCE [LARGE SCALE GENOMIC DNA]</scope>
    <source>
        <strain>ATCC 14822 / DSM 2638 / NCIMB 8403 / VKM B-1763</strain>
    </source>
</reference>
<sequence length="425" mass="48221">MLDLKFVQNNLDVVRESLEKRGSKLDVNEFSDLDSRRKSLLQEVESLKAERNSTSGEIAKIKREGGDASEIIARMGEVSGKIKALDEDLKDIEAAEREWLSSVPNMPDESVPFGKTEDDNPVIRHWGEKPEFDFTPREHWDLAVELGGVDFERAAKLTGARFVVLKKWGARLERALTSFMVDVQTMDHGYTEVIPPYIVNRDSLFGTGQLPKFEEDLFKLKNWEYYMIPTAEVPLTNLHRDEVLSEDDLSIAYCAPTPCFRSEAGSYGKDTKGLIRQHQFHKVEMVRFAHPDKSFEDLEKMTGHAEEILKRLGLHYRVITLCTGDMGFGSAKTYDIEVWLPGQDKYREISSCSNCVDFQARRANIKFQPKDSKKKQFVHTLNGSGLAVGRTFVAVVENYQQKDGSIVIPEALRPYMGGLEVITAE</sequence>
<keyword id="KW-0030">Aminoacyl-tRNA synthetase</keyword>
<keyword id="KW-0067">ATP-binding</keyword>
<keyword id="KW-0963">Cytoplasm</keyword>
<keyword id="KW-0436">Ligase</keyword>
<keyword id="KW-0547">Nucleotide-binding</keyword>
<keyword id="KW-0648">Protein biosynthesis</keyword>
<keyword id="KW-1185">Reference proteome</keyword>
<dbReference type="EC" id="6.1.1.11" evidence="1"/>
<dbReference type="EMBL" id="CP001649">
    <property type="protein sequence ID" value="ACS81426.1"/>
    <property type="molecule type" value="Genomic_DNA"/>
</dbReference>
<dbReference type="RefSeq" id="WP_015853242.1">
    <property type="nucleotide sequence ID" value="NC_012881.1"/>
</dbReference>
<dbReference type="SMR" id="C6BS43"/>
<dbReference type="STRING" id="526222.Desal_3376"/>
<dbReference type="KEGG" id="dsa:Desal_3376"/>
<dbReference type="eggNOG" id="COG0172">
    <property type="taxonomic scope" value="Bacteria"/>
</dbReference>
<dbReference type="HOGENOM" id="CLU_023797_1_1_7"/>
<dbReference type="OrthoDB" id="9804647at2"/>
<dbReference type="UniPathway" id="UPA00906">
    <property type="reaction ID" value="UER00895"/>
</dbReference>
<dbReference type="Proteomes" id="UP000002601">
    <property type="component" value="Chromosome"/>
</dbReference>
<dbReference type="GO" id="GO:0005737">
    <property type="term" value="C:cytoplasm"/>
    <property type="evidence" value="ECO:0007669"/>
    <property type="project" value="UniProtKB-SubCell"/>
</dbReference>
<dbReference type="GO" id="GO:0005524">
    <property type="term" value="F:ATP binding"/>
    <property type="evidence" value="ECO:0007669"/>
    <property type="project" value="UniProtKB-UniRule"/>
</dbReference>
<dbReference type="GO" id="GO:0004828">
    <property type="term" value="F:serine-tRNA ligase activity"/>
    <property type="evidence" value="ECO:0007669"/>
    <property type="project" value="UniProtKB-UniRule"/>
</dbReference>
<dbReference type="GO" id="GO:0016260">
    <property type="term" value="P:selenocysteine biosynthetic process"/>
    <property type="evidence" value="ECO:0007669"/>
    <property type="project" value="UniProtKB-UniRule"/>
</dbReference>
<dbReference type="GO" id="GO:0006434">
    <property type="term" value="P:seryl-tRNA aminoacylation"/>
    <property type="evidence" value="ECO:0007669"/>
    <property type="project" value="UniProtKB-UniRule"/>
</dbReference>
<dbReference type="CDD" id="cd00770">
    <property type="entry name" value="SerRS_core"/>
    <property type="match status" value="1"/>
</dbReference>
<dbReference type="Gene3D" id="3.30.930.10">
    <property type="entry name" value="Bira Bifunctional Protein, Domain 2"/>
    <property type="match status" value="1"/>
</dbReference>
<dbReference type="Gene3D" id="1.10.287.40">
    <property type="entry name" value="Serine-tRNA synthetase, tRNA binding domain"/>
    <property type="match status" value="1"/>
</dbReference>
<dbReference type="HAMAP" id="MF_00176">
    <property type="entry name" value="Ser_tRNA_synth_type1"/>
    <property type="match status" value="1"/>
</dbReference>
<dbReference type="InterPro" id="IPR002314">
    <property type="entry name" value="aa-tRNA-synt_IIb"/>
</dbReference>
<dbReference type="InterPro" id="IPR006195">
    <property type="entry name" value="aa-tRNA-synth_II"/>
</dbReference>
<dbReference type="InterPro" id="IPR045864">
    <property type="entry name" value="aa-tRNA-synth_II/BPL/LPL"/>
</dbReference>
<dbReference type="InterPro" id="IPR002317">
    <property type="entry name" value="Ser-tRNA-ligase_type_1"/>
</dbReference>
<dbReference type="InterPro" id="IPR015866">
    <property type="entry name" value="Ser-tRNA-synth_1_N"/>
</dbReference>
<dbReference type="InterPro" id="IPR042103">
    <property type="entry name" value="SerRS_1_N_sf"/>
</dbReference>
<dbReference type="InterPro" id="IPR033729">
    <property type="entry name" value="SerRS_core"/>
</dbReference>
<dbReference type="InterPro" id="IPR010978">
    <property type="entry name" value="tRNA-bd_arm"/>
</dbReference>
<dbReference type="NCBIfam" id="TIGR00414">
    <property type="entry name" value="serS"/>
    <property type="match status" value="1"/>
</dbReference>
<dbReference type="PANTHER" id="PTHR43697:SF1">
    <property type="entry name" value="SERINE--TRNA LIGASE"/>
    <property type="match status" value="1"/>
</dbReference>
<dbReference type="PANTHER" id="PTHR43697">
    <property type="entry name" value="SERYL-TRNA SYNTHETASE"/>
    <property type="match status" value="1"/>
</dbReference>
<dbReference type="Pfam" id="PF02403">
    <property type="entry name" value="Seryl_tRNA_N"/>
    <property type="match status" value="1"/>
</dbReference>
<dbReference type="Pfam" id="PF00587">
    <property type="entry name" value="tRNA-synt_2b"/>
    <property type="match status" value="1"/>
</dbReference>
<dbReference type="PIRSF" id="PIRSF001529">
    <property type="entry name" value="Ser-tRNA-synth_IIa"/>
    <property type="match status" value="1"/>
</dbReference>
<dbReference type="PRINTS" id="PR00981">
    <property type="entry name" value="TRNASYNTHSER"/>
</dbReference>
<dbReference type="SUPFAM" id="SSF55681">
    <property type="entry name" value="Class II aaRS and biotin synthetases"/>
    <property type="match status" value="1"/>
</dbReference>
<dbReference type="SUPFAM" id="SSF46589">
    <property type="entry name" value="tRNA-binding arm"/>
    <property type="match status" value="1"/>
</dbReference>
<dbReference type="PROSITE" id="PS50862">
    <property type="entry name" value="AA_TRNA_LIGASE_II"/>
    <property type="match status" value="1"/>
</dbReference>
<comment type="function">
    <text evidence="1">Catalyzes the attachment of serine to tRNA(Ser). Is also able to aminoacylate tRNA(Sec) with serine, to form the misacylated tRNA L-seryl-tRNA(Sec), which will be further converted into selenocysteinyl-tRNA(Sec).</text>
</comment>
<comment type="catalytic activity">
    <reaction evidence="1">
        <text>tRNA(Ser) + L-serine + ATP = L-seryl-tRNA(Ser) + AMP + diphosphate + H(+)</text>
        <dbReference type="Rhea" id="RHEA:12292"/>
        <dbReference type="Rhea" id="RHEA-COMP:9669"/>
        <dbReference type="Rhea" id="RHEA-COMP:9703"/>
        <dbReference type="ChEBI" id="CHEBI:15378"/>
        <dbReference type="ChEBI" id="CHEBI:30616"/>
        <dbReference type="ChEBI" id="CHEBI:33019"/>
        <dbReference type="ChEBI" id="CHEBI:33384"/>
        <dbReference type="ChEBI" id="CHEBI:78442"/>
        <dbReference type="ChEBI" id="CHEBI:78533"/>
        <dbReference type="ChEBI" id="CHEBI:456215"/>
        <dbReference type="EC" id="6.1.1.11"/>
    </reaction>
</comment>
<comment type="catalytic activity">
    <reaction evidence="1">
        <text>tRNA(Sec) + L-serine + ATP = L-seryl-tRNA(Sec) + AMP + diphosphate + H(+)</text>
        <dbReference type="Rhea" id="RHEA:42580"/>
        <dbReference type="Rhea" id="RHEA-COMP:9742"/>
        <dbReference type="Rhea" id="RHEA-COMP:10128"/>
        <dbReference type="ChEBI" id="CHEBI:15378"/>
        <dbReference type="ChEBI" id="CHEBI:30616"/>
        <dbReference type="ChEBI" id="CHEBI:33019"/>
        <dbReference type="ChEBI" id="CHEBI:33384"/>
        <dbReference type="ChEBI" id="CHEBI:78442"/>
        <dbReference type="ChEBI" id="CHEBI:78533"/>
        <dbReference type="ChEBI" id="CHEBI:456215"/>
        <dbReference type="EC" id="6.1.1.11"/>
    </reaction>
</comment>
<comment type="pathway">
    <text evidence="1">Aminoacyl-tRNA biosynthesis; selenocysteinyl-tRNA(Sec) biosynthesis; L-seryl-tRNA(Sec) from L-serine and tRNA(Sec): step 1/1.</text>
</comment>
<comment type="subunit">
    <text evidence="1">Homodimer. The tRNA molecule binds across the dimer.</text>
</comment>
<comment type="subcellular location">
    <subcellularLocation>
        <location evidence="1">Cytoplasm</location>
    </subcellularLocation>
</comment>
<comment type="domain">
    <text evidence="1">Consists of two distinct domains, a catalytic core and a N-terminal extension that is involved in tRNA binding.</text>
</comment>
<comment type="similarity">
    <text evidence="1">Belongs to the class-II aminoacyl-tRNA synthetase family. Type-1 seryl-tRNA synthetase subfamily.</text>
</comment>
<name>SYS_MARSD</name>
<protein>
    <recommendedName>
        <fullName evidence="1">Serine--tRNA ligase</fullName>
        <ecNumber evidence="1">6.1.1.11</ecNumber>
    </recommendedName>
    <alternativeName>
        <fullName evidence="1">Seryl-tRNA synthetase</fullName>
        <shortName evidence="1">SerRS</shortName>
    </alternativeName>
    <alternativeName>
        <fullName evidence="1">Seryl-tRNA(Ser/Sec) synthetase</fullName>
    </alternativeName>
</protein>
<organism>
    <name type="scientific">Maridesulfovibrio salexigens (strain ATCC 14822 / DSM 2638 / NCIMB 8403 / VKM B-1763)</name>
    <name type="common">Desulfovibrio salexigens</name>
    <dbReference type="NCBI Taxonomy" id="526222"/>
    <lineage>
        <taxon>Bacteria</taxon>
        <taxon>Pseudomonadati</taxon>
        <taxon>Thermodesulfobacteriota</taxon>
        <taxon>Desulfovibrionia</taxon>
        <taxon>Desulfovibrionales</taxon>
        <taxon>Desulfovibrionaceae</taxon>
        <taxon>Maridesulfovibrio</taxon>
    </lineage>
</organism>
<gene>
    <name evidence="1" type="primary">serS</name>
    <name type="ordered locus">Desal_3376</name>
</gene>